<accession>O28766</accession>
<protein>
    <recommendedName>
        <fullName evidence="1">Aspartate-semialdehyde dehydrogenase</fullName>
        <shortName evidence="1">ASA dehydrogenase</shortName>
        <shortName evidence="1">ASADH</shortName>
        <ecNumber evidence="1">1.2.1.11</ecNumber>
    </recommendedName>
    <alternativeName>
        <fullName evidence="1">Aspartate-beta-semialdehyde dehydrogenase</fullName>
    </alternativeName>
</protein>
<comment type="function">
    <text evidence="1">Catalyzes the NADPH-dependent formation of L-aspartate-semialdehyde (L-ASA) by the reductive dephosphorylation of L-aspartyl-4-phosphate.</text>
</comment>
<comment type="catalytic activity">
    <reaction evidence="1">
        <text>L-aspartate 4-semialdehyde + phosphate + NADP(+) = 4-phospho-L-aspartate + NADPH + H(+)</text>
        <dbReference type="Rhea" id="RHEA:24284"/>
        <dbReference type="ChEBI" id="CHEBI:15378"/>
        <dbReference type="ChEBI" id="CHEBI:43474"/>
        <dbReference type="ChEBI" id="CHEBI:57535"/>
        <dbReference type="ChEBI" id="CHEBI:57783"/>
        <dbReference type="ChEBI" id="CHEBI:58349"/>
        <dbReference type="ChEBI" id="CHEBI:537519"/>
        <dbReference type="EC" id="1.2.1.11"/>
    </reaction>
</comment>
<comment type="pathway">
    <text evidence="1">Amino-acid biosynthesis; L-lysine biosynthesis via DAP pathway; (S)-tetrahydrodipicolinate from L-aspartate: step 2/4.</text>
</comment>
<comment type="pathway">
    <text evidence="1">Amino-acid biosynthesis; L-methionine biosynthesis via de novo pathway; L-homoserine from L-aspartate: step 2/3.</text>
</comment>
<comment type="pathway">
    <text evidence="1">Amino-acid biosynthesis; L-threonine biosynthesis; L-threonine from L-aspartate: step 2/5.</text>
</comment>
<comment type="subunit">
    <text evidence="1">Homodimer.</text>
</comment>
<comment type="similarity">
    <text evidence="1">Belongs to the aspartate-semialdehyde dehydrogenase family.</text>
</comment>
<gene>
    <name evidence="1" type="primary">asd</name>
    <name type="ordered locus">AF_1506</name>
</gene>
<name>DHAS_ARCFU</name>
<proteinExistence type="inferred from homology"/>
<sequence length="343" mass="37697">MRYSVGVLGATGMVGQKFIQMLAEHPWFKLTSLAASERRVGKKYGEEVDWIVSREVPDIAKDIEMVPMDPKHVDADIVFSALPSDIAREVEPKFAEAGFVVASNASAYRMAEDVPLVIPEVNPEHLGLIEVQKKNRGWDGFIVTNPNCTTIVLVLSLKPLMDLGLRTVRVASMQALSGAGYPGVPSLAITDNVIPFIKGEEDKVEEEPLKLLGKFNGRKIEFADIKVSASCHRVPVIDGHTEAVWVEFDREVSVEEAKAAFESLKPLDLPTSPEKVIIVREEPDRPQPRLDRDAGNGMSITVGRIRKDGERGLKYIVLGHNTVRGAAGASILNAELMIKEKII</sequence>
<evidence type="ECO:0000255" key="1">
    <source>
        <dbReference type="HAMAP-Rule" id="MF_02121"/>
    </source>
</evidence>
<feature type="chain" id="PRO_0000141396" description="Aspartate-semialdehyde dehydrogenase">
    <location>
        <begin position="1"/>
        <end position="343"/>
    </location>
</feature>
<feature type="active site" description="Acyl-thioester intermediate" evidence="1">
    <location>
        <position position="148"/>
    </location>
</feature>
<feature type="active site" description="Proton acceptor" evidence="1">
    <location>
        <position position="240"/>
    </location>
</feature>
<feature type="binding site" evidence="1">
    <location>
        <begin position="11"/>
        <end position="14"/>
    </location>
    <ligand>
        <name>NADP(+)</name>
        <dbReference type="ChEBI" id="CHEBI:58349"/>
    </ligand>
</feature>
<feature type="binding site" evidence="1">
    <location>
        <position position="109"/>
    </location>
    <ligand>
        <name>phosphate</name>
        <dbReference type="ChEBI" id="CHEBI:43474"/>
    </ligand>
</feature>
<feature type="binding site" evidence="1">
    <location>
        <position position="174"/>
    </location>
    <ligand>
        <name>substrate</name>
    </ligand>
</feature>
<feature type="binding site" evidence="1">
    <location>
        <begin position="177"/>
        <end position="178"/>
    </location>
    <ligand>
        <name>NADP(+)</name>
        <dbReference type="ChEBI" id="CHEBI:58349"/>
    </ligand>
</feature>
<feature type="binding site" evidence="1">
    <location>
        <position position="200"/>
    </location>
    <ligand>
        <name>substrate</name>
    </ligand>
</feature>
<feature type="binding site" evidence="1">
    <location>
        <position position="203"/>
    </location>
    <ligand>
        <name>phosphate</name>
        <dbReference type="ChEBI" id="CHEBI:43474"/>
    </ligand>
</feature>
<feature type="binding site" evidence="1">
    <location>
        <position position="233"/>
    </location>
    <ligand>
        <name>substrate</name>
    </ligand>
</feature>
<feature type="binding site" evidence="1">
    <location>
        <begin position="321"/>
        <end position="322"/>
    </location>
    <ligand>
        <name>NADP(+)</name>
        <dbReference type="ChEBI" id="CHEBI:58349"/>
    </ligand>
</feature>
<reference key="1">
    <citation type="journal article" date="1997" name="Nature">
        <title>The complete genome sequence of the hyperthermophilic, sulphate-reducing archaeon Archaeoglobus fulgidus.</title>
        <authorList>
            <person name="Klenk H.-P."/>
            <person name="Clayton R.A."/>
            <person name="Tomb J.-F."/>
            <person name="White O."/>
            <person name="Nelson K.E."/>
            <person name="Ketchum K.A."/>
            <person name="Dodson R.J."/>
            <person name="Gwinn M.L."/>
            <person name="Hickey E.K."/>
            <person name="Peterson J.D."/>
            <person name="Richardson D.L."/>
            <person name="Kerlavage A.R."/>
            <person name="Graham D.E."/>
            <person name="Kyrpides N.C."/>
            <person name="Fleischmann R.D."/>
            <person name="Quackenbush J."/>
            <person name="Lee N.H."/>
            <person name="Sutton G.G."/>
            <person name="Gill S.R."/>
            <person name="Kirkness E.F."/>
            <person name="Dougherty B.A."/>
            <person name="McKenney K."/>
            <person name="Adams M.D."/>
            <person name="Loftus B.J."/>
            <person name="Peterson S.N."/>
            <person name="Reich C.I."/>
            <person name="McNeil L.K."/>
            <person name="Badger J.H."/>
            <person name="Glodek A."/>
            <person name="Zhou L."/>
            <person name="Overbeek R."/>
            <person name="Gocayne J.D."/>
            <person name="Weidman J.F."/>
            <person name="McDonald L.A."/>
            <person name="Utterback T.R."/>
            <person name="Cotton M.D."/>
            <person name="Spriggs T."/>
            <person name="Artiach P."/>
            <person name="Kaine B.P."/>
            <person name="Sykes S.M."/>
            <person name="Sadow P.W."/>
            <person name="D'Andrea K.P."/>
            <person name="Bowman C."/>
            <person name="Fujii C."/>
            <person name="Garland S.A."/>
            <person name="Mason T.M."/>
            <person name="Olsen G.J."/>
            <person name="Fraser C.M."/>
            <person name="Smith H.O."/>
            <person name="Woese C.R."/>
            <person name="Venter J.C."/>
        </authorList>
    </citation>
    <scope>NUCLEOTIDE SEQUENCE [LARGE SCALE GENOMIC DNA]</scope>
    <source>
        <strain>ATCC 49558 / DSM 4304 / JCM 9628 / NBRC 100126 / VC-16</strain>
    </source>
</reference>
<keyword id="KW-0028">Amino-acid biosynthesis</keyword>
<keyword id="KW-0220">Diaminopimelate biosynthesis</keyword>
<keyword id="KW-0457">Lysine biosynthesis</keyword>
<keyword id="KW-0486">Methionine biosynthesis</keyword>
<keyword id="KW-0521">NADP</keyword>
<keyword id="KW-0560">Oxidoreductase</keyword>
<keyword id="KW-1185">Reference proteome</keyword>
<keyword id="KW-0791">Threonine biosynthesis</keyword>
<dbReference type="EC" id="1.2.1.11" evidence="1"/>
<dbReference type="EMBL" id="AE000782">
    <property type="protein sequence ID" value="AAB89738.1"/>
    <property type="molecule type" value="Genomic_DNA"/>
</dbReference>
<dbReference type="PIR" id="A69438">
    <property type="entry name" value="A69438"/>
</dbReference>
<dbReference type="RefSeq" id="WP_010879003.1">
    <property type="nucleotide sequence ID" value="NC_000917.1"/>
</dbReference>
<dbReference type="SMR" id="O28766"/>
<dbReference type="STRING" id="224325.AF_1506"/>
<dbReference type="PaxDb" id="224325-AF_1506"/>
<dbReference type="EnsemblBacteria" id="AAB89738">
    <property type="protein sequence ID" value="AAB89738"/>
    <property type="gene ID" value="AF_1506"/>
</dbReference>
<dbReference type="GeneID" id="1484733"/>
<dbReference type="KEGG" id="afu:AF_1506"/>
<dbReference type="eggNOG" id="arCOG00494">
    <property type="taxonomic scope" value="Archaea"/>
</dbReference>
<dbReference type="HOGENOM" id="CLU_049966_1_0_2"/>
<dbReference type="OrthoDB" id="38238at2157"/>
<dbReference type="PhylomeDB" id="O28766"/>
<dbReference type="UniPathway" id="UPA00034">
    <property type="reaction ID" value="UER00016"/>
</dbReference>
<dbReference type="UniPathway" id="UPA00050">
    <property type="reaction ID" value="UER00463"/>
</dbReference>
<dbReference type="UniPathway" id="UPA00051">
    <property type="reaction ID" value="UER00464"/>
</dbReference>
<dbReference type="Proteomes" id="UP000002199">
    <property type="component" value="Chromosome"/>
</dbReference>
<dbReference type="GO" id="GO:0004073">
    <property type="term" value="F:aspartate-semialdehyde dehydrogenase activity"/>
    <property type="evidence" value="ECO:0007669"/>
    <property type="project" value="UniProtKB-UniRule"/>
</dbReference>
<dbReference type="GO" id="GO:0051287">
    <property type="term" value="F:NAD binding"/>
    <property type="evidence" value="ECO:0007669"/>
    <property type="project" value="InterPro"/>
</dbReference>
<dbReference type="GO" id="GO:0050661">
    <property type="term" value="F:NADP binding"/>
    <property type="evidence" value="ECO:0007669"/>
    <property type="project" value="UniProtKB-UniRule"/>
</dbReference>
<dbReference type="GO" id="GO:0046983">
    <property type="term" value="F:protein dimerization activity"/>
    <property type="evidence" value="ECO:0007669"/>
    <property type="project" value="InterPro"/>
</dbReference>
<dbReference type="GO" id="GO:0071266">
    <property type="term" value="P:'de novo' L-methionine biosynthetic process"/>
    <property type="evidence" value="ECO:0007669"/>
    <property type="project" value="UniProtKB-UniRule"/>
</dbReference>
<dbReference type="GO" id="GO:0019877">
    <property type="term" value="P:diaminopimelate biosynthetic process"/>
    <property type="evidence" value="ECO:0007669"/>
    <property type="project" value="UniProtKB-UniRule"/>
</dbReference>
<dbReference type="GO" id="GO:0009089">
    <property type="term" value="P:lysine biosynthetic process via diaminopimelate"/>
    <property type="evidence" value="ECO:0007669"/>
    <property type="project" value="UniProtKB-UniRule"/>
</dbReference>
<dbReference type="GO" id="GO:0009088">
    <property type="term" value="P:threonine biosynthetic process"/>
    <property type="evidence" value="ECO:0007669"/>
    <property type="project" value="UniProtKB-UniRule"/>
</dbReference>
<dbReference type="CDD" id="cd18130">
    <property type="entry name" value="ASADH_C_arch_fung_like"/>
    <property type="match status" value="1"/>
</dbReference>
<dbReference type="CDD" id="cd02315">
    <property type="entry name" value="ScASADH_like_N"/>
    <property type="match status" value="1"/>
</dbReference>
<dbReference type="FunFam" id="3.30.360.10:FF:000016">
    <property type="entry name" value="Probable aspartate-semialdehyde dehydrogenase"/>
    <property type="match status" value="1"/>
</dbReference>
<dbReference type="Gene3D" id="3.30.360.10">
    <property type="entry name" value="Dihydrodipicolinate Reductase, domain 2"/>
    <property type="match status" value="1"/>
</dbReference>
<dbReference type="Gene3D" id="3.40.50.720">
    <property type="entry name" value="NAD(P)-binding Rossmann-like Domain"/>
    <property type="match status" value="1"/>
</dbReference>
<dbReference type="HAMAP" id="MF_02121">
    <property type="entry name" value="ASADH"/>
    <property type="match status" value="1"/>
</dbReference>
<dbReference type="InterPro" id="IPR051823">
    <property type="entry name" value="ASADH-related"/>
</dbReference>
<dbReference type="InterPro" id="IPR000319">
    <property type="entry name" value="Asp-semialdehyde_DH_CS"/>
</dbReference>
<dbReference type="InterPro" id="IPR005676">
    <property type="entry name" value="Asp_semi-ald_DH_pep-lack"/>
</dbReference>
<dbReference type="InterPro" id="IPR012080">
    <property type="entry name" value="Asp_semialdehyde_DH"/>
</dbReference>
<dbReference type="InterPro" id="IPR036291">
    <property type="entry name" value="NAD(P)-bd_dom_sf"/>
</dbReference>
<dbReference type="InterPro" id="IPR000534">
    <property type="entry name" value="Semialdehyde_DH_NAD-bd"/>
</dbReference>
<dbReference type="InterPro" id="IPR012280">
    <property type="entry name" value="Semialdhyde_DH_dimer_dom"/>
</dbReference>
<dbReference type="NCBIfam" id="TIGR00978">
    <property type="entry name" value="asd_EA"/>
    <property type="match status" value="1"/>
</dbReference>
<dbReference type="NCBIfam" id="NF006416">
    <property type="entry name" value="PRK08664.1"/>
    <property type="match status" value="1"/>
</dbReference>
<dbReference type="PANTHER" id="PTHR46718">
    <property type="entry name" value="ASPARTATE-SEMIALDEHYDE DEHYDROGENASE"/>
    <property type="match status" value="1"/>
</dbReference>
<dbReference type="PANTHER" id="PTHR46718:SF1">
    <property type="entry name" value="ASPARTATE-SEMIALDEHYDE DEHYDROGENASE"/>
    <property type="match status" value="1"/>
</dbReference>
<dbReference type="Pfam" id="PF01118">
    <property type="entry name" value="Semialdhyde_dh"/>
    <property type="match status" value="1"/>
</dbReference>
<dbReference type="Pfam" id="PF02774">
    <property type="entry name" value="Semialdhyde_dhC"/>
    <property type="match status" value="1"/>
</dbReference>
<dbReference type="PIRSF" id="PIRSF000148">
    <property type="entry name" value="ASA_dh"/>
    <property type="match status" value="1"/>
</dbReference>
<dbReference type="SMART" id="SM00859">
    <property type="entry name" value="Semialdhyde_dh"/>
    <property type="match status" value="1"/>
</dbReference>
<dbReference type="SUPFAM" id="SSF55347">
    <property type="entry name" value="Glyceraldehyde-3-phosphate dehydrogenase-like, C-terminal domain"/>
    <property type="match status" value="1"/>
</dbReference>
<dbReference type="SUPFAM" id="SSF51735">
    <property type="entry name" value="NAD(P)-binding Rossmann-fold domains"/>
    <property type="match status" value="1"/>
</dbReference>
<dbReference type="PROSITE" id="PS01103">
    <property type="entry name" value="ASD"/>
    <property type="match status" value="1"/>
</dbReference>
<organism>
    <name type="scientific">Archaeoglobus fulgidus (strain ATCC 49558 / DSM 4304 / JCM 9628 / NBRC 100126 / VC-16)</name>
    <dbReference type="NCBI Taxonomy" id="224325"/>
    <lineage>
        <taxon>Archaea</taxon>
        <taxon>Methanobacteriati</taxon>
        <taxon>Methanobacteriota</taxon>
        <taxon>Archaeoglobi</taxon>
        <taxon>Archaeoglobales</taxon>
        <taxon>Archaeoglobaceae</taxon>
        <taxon>Archaeoglobus</taxon>
    </lineage>
</organism>